<comment type="function">
    <text>Regulates arginine biosynthesis genes.</text>
</comment>
<comment type="pathway">
    <text>Amino-acid biosynthesis; L-arginine biosynthesis [regulation].</text>
</comment>
<comment type="subcellular location">
    <subcellularLocation>
        <location evidence="1">Cytoplasm</location>
    </subcellularLocation>
</comment>
<comment type="similarity">
    <text evidence="2">Belongs to the ArgR family.</text>
</comment>
<feature type="chain" id="PRO_0000205123" description="Arginine repressor">
    <location>
        <begin position="1"/>
        <end position="178"/>
    </location>
</feature>
<name>ARGR_STRCL</name>
<keyword id="KW-0028">Amino-acid biosynthesis</keyword>
<keyword id="KW-0055">Arginine biosynthesis</keyword>
<keyword id="KW-0963">Cytoplasm</keyword>
<keyword id="KW-0238">DNA-binding</keyword>
<keyword id="KW-0678">Repressor</keyword>
<keyword id="KW-0804">Transcription</keyword>
<keyword id="KW-0805">Transcription regulation</keyword>
<accession>P95721</accession>
<accession>Q9LCS4</accession>
<organism>
    <name type="scientific">Streptomyces clavuligerus</name>
    <dbReference type="NCBI Taxonomy" id="1901"/>
    <lineage>
        <taxon>Bacteria</taxon>
        <taxon>Bacillati</taxon>
        <taxon>Actinomycetota</taxon>
        <taxon>Actinomycetes</taxon>
        <taxon>Kitasatosporales</taxon>
        <taxon>Streptomycetaceae</taxon>
        <taxon>Streptomyces</taxon>
    </lineage>
</organism>
<proteinExistence type="inferred from homology"/>
<protein>
    <recommendedName>
        <fullName>Arginine repressor</fullName>
    </recommendedName>
</protein>
<evidence type="ECO:0000250" key="1"/>
<evidence type="ECO:0000305" key="2"/>
<dbReference type="EMBL" id="Z49111">
    <property type="protein sequence ID" value="CAB82483.1"/>
    <property type="molecule type" value="Genomic_DNA"/>
</dbReference>
<dbReference type="PIR" id="PC4127">
    <property type="entry name" value="PC4127"/>
</dbReference>
<dbReference type="SMR" id="P95721"/>
<dbReference type="STRING" id="1901.BB341_23960"/>
<dbReference type="eggNOG" id="COG1438">
    <property type="taxonomic scope" value="Bacteria"/>
</dbReference>
<dbReference type="UniPathway" id="UPA00068"/>
<dbReference type="GO" id="GO:0005737">
    <property type="term" value="C:cytoplasm"/>
    <property type="evidence" value="ECO:0007669"/>
    <property type="project" value="UniProtKB-SubCell"/>
</dbReference>
<dbReference type="GO" id="GO:0034618">
    <property type="term" value="F:arginine binding"/>
    <property type="evidence" value="ECO:0007669"/>
    <property type="project" value="InterPro"/>
</dbReference>
<dbReference type="GO" id="GO:0003677">
    <property type="term" value="F:DNA binding"/>
    <property type="evidence" value="ECO:0007669"/>
    <property type="project" value="UniProtKB-KW"/>
</dbReference>
<dbReference type="GO" id="GO:0003700">
    <property type="term" value="F:DNA-binding transcription factor activity"/>
    <property type="evidence" value="ECO:0007669"/>
    <property type="project" value="UniProtKB-UniRule"/>
</dbReference>
<dbReference type="GO" id="GO:0006526">
    <property type="term" value="P:L-arginine biosynthetic process"/>
    <property type="evidence" value="ECO:0007669"/>
    <property type="project" value="UniProtKB-UniPathway"/>
</dbReference>
<dbReference type="GO" id="GO:0051259">
    <property type="term" value="P:protein complex oligomerization"/>
    <property type="evidence" value="ECO:0007669"/>
    <property type="project" value="InterPro"/>
</dbReference>
<dbReference type="GO" id="GO:1900079">
    <property type="term" value="P:regulation of arginine biosynthetic process"/>
    <property type="evidence" value="ECO:0007669"/>
    <property type="project" value="UniProtKB-UniRule"/>
</dbReference>
<dbReference type="Gene3D" id="3.30.1360.40">
    <property type="match status" value="1"/>
</dbReference>
<dbReference type="Gene3D" id="1.10.10.10">
    <property type="entry name" value="Winged helix-like DNA-binding domain superfamily/Winged helix DNA-binding domain"/>
    <property type="match status" value="1"/>
</dbReference>
<dbReference type="HAMAP" id="MF_00173">
    <property type="entry name" value="Arg_repressor"/>
    <property type="match status" value="1"/>
</dbReference>
<dbReference type="InterPro" id="IPR001669">
    <property type="entry name" value="Arg_repress"/>
</dbReference>
<dbReference type="InterPro" id="IPR020899">
    <property type="entry name" value="Arg_repress_C"/>
</dbReference>
<dbReference type="InterPro" id="IPR036251">
    <property type="entry name" value="Arg_repress_C_sf"/>
</dbReference>
<dbReference type="InterPro" id="IPR020900">
    <property type="entry name" value="Arg_repress_DNA-bd"/>
</dbReference>
<dbReference type="InterPro" id="IPR036388">
    <property type="entry name" value="WH-like_DNA-bd_sf"/>
</dbReference>
<dbReference type="InterPro" id="IPR036390">
    <property type="entry name" value="WH_DNA-bd_sf"/>
</dbReference>
<dbReference type="NCBIfam" id="TIGR01529">
    <property type="entry name" value="argR_whole"/>
    <property type="match status" value="1"/>
</dbReference>
<dbReference type="NCBIfam" id="NF002880">
    <property type="entry name" value="PRK03341.1"/>
    <property type="match status" value="1"/>
</dbReference>
<dbReference type="PANTHER" id="PTHR34471">
    <property type="entry name" value="ARGININE REPRESSOR"/>
    <property type="match status" value="1"/>
</dbReference>
<dbReference type="PANTHER" id="PTHR34471:SF1">
    <property type="entry name" value="ARGININE REPRESSOR"/>
    <property type="match status" value="1"/>
</dbReference>
<dbReference type="Pfam" id="PF01316">
    <property type="entry name" value="Arg_repressor"/>
    <property type="match status" value="1"/>
</dbReference>
<dbReference type="Pfam" id="PF02863">
    <property type="entry name" value="Arg_repressor_C"/>
    <property type="match status" value="1"/>
</dbReference>
<dbReference type="PRINTS" id="PR01467">
    <property type="entry name" value="ARGREPRESSOR"/>
</dbReference>
<dbReference type="SUPFAM" id="SSF55252">
    <property type="entry name" value="C-terminal domain of arginine repressor"/>
    <property type="match status" value="1"/>
</dbReference>
<dbReference type="SUPFAM" id="SSF46785">
    <property type="entry name" value="Winged helix' DNA-binding domain"/>
    <property type="match status" value="1"/>
</dbReference>
<reference key="1">
    <citation type="journal article" date="1997" name="Mol. Microbiol.">
        <title>Arginine boxes and the argR gene in Streptomyces clavuligerus: evidence for a clear regulation of the arginine pathway.</title>
        <authorList>
            <person name="Rodriguez-Garcia A."/>
            <person name="Ludovice M."/>
            <person name="Martin J.F."/>
            <person name="Liras P."/>
        </authorList>
    </citation>
    <scope>NUCLEOTIDE SEQUENCE [GENOMIC DNA]</scope>
    <source>
        <strain>ATCC 27064 / DSM 738 / JCM 4710 / NBRC 13307 / NCIMB 12785 / NRRL 3585 / VKM Ac-602</strain>
    </source>
</reference>
<reference key="2">
    <citation type="journal article" date="2000" name="J. Mol. Microbiol. Biotechnol.">
        <title>Characterization and expression of the arginine biosynthesis gene cluster of Streptomyces clavuligerus.</title>
        <authorList>
            <person name="Rodriguez-Garcia A."/>
            <person name="de la Fuente A."/>
            <person name="Perez-Redondo R."/>
            <person name="Martin J.F."/>
            <person name="Liras P."/>
        </authorList>
    </citation>
    <scope>NUCLEOTIDE SEQUENCE [GENOMIC DNA]</scope>
    <source>
        <strain>ATCC 27064 / DSM 738 / JCM 4710 / NBRC 13307 / NCIMB 12785 / NRRL 3585 / VKM Ac-602</strain>
    </source>
</reference>
<gene>
    <name type="primary">argR</name>
</gene>
<sequence length="178" mass="18908">MTEAHATDAGGPAVPQTRMARHRRIVDILNRQPVRSQSQLAKLLADNGLSVTQATLSRDLDELGAVKIRNTMARLIYAVPARGVPHSAGALGESAKEERMRRLAGELLISAEASANLVVLRTPPGAAQFLASAIDQAELHDILGTIAGDDTLMLISRSPTGGQALADHLLRLAQNDRA</sequence>